<feature type="signal peptide" evidence="4">
    <location>
        <begin position="1"/>
        <end position="39"/>
    </location>
</feature>
<feature type="chain" id="PRO_5003363093" description="Cutinase est2" evidence="4">
    <location>
        <begin position="40"/>
        <end position="300"/>
    </location>
</feature>
<feature type="active site" description="Nucleophile" evidence="18">
    <location>
        <position position="169"/>
    </location>
</feature>
<feature type="active site" description="Charge relay system" evidence="18">
    <location>
        <position position="215"/>
    </location>
</feature>
<feature type="active site" description="Charge relay system" evidence="18">
    <location>
        <position position="247"/>
    </location>
</feature>
<feature type="binding site" evidence="1">
    <location>
        <position position="99"/>
    </location>
    <ligand>
        <name>poly(ethylene terephthalate)</name>
        <dbReference type="ChEBI" id="CHEBI:131701"/>
    </ligand>
</feature>
<feature type="binding site" evidence="1">
    <location>
        <position position="170"/>
    </location>
    <ligand>
        <name>poly(ethylene terephthalate)</name>
        <dbReference type="ChEBI" id="CHEBI:131701"/>
    </ligand>
</feature>
<feature type="binding site" evidence="1">
    <location>
        <position position="194"/>
    </location>
    <ligand>
        <name>poly(ethylene terephthalate)</name>
        <dbReference type="ChEBI" id="CHEBI:131701"/>
    </ligand>
</feature>
<feature type="binding site" evidence="8 22 23">
    <location>
        <position position="213"/>
    </location>
    <ligand>
        <name>Ca(2+)</name>
        <dbReference type="ChEBI" id="CHEBI:29108"/>
    </ligand>
</feature>
<feature type="binding site" evidence="8 22 23">
    <location>
        <position position="243"/>
    </location>
    <ligand>
        <name>Ca(2+)</name>
        <dbReference type="ChEBI" id="CHEBI:29108"/>
    </ligand>
</feature>
<feature type="binding site" evidence="8 22 23">
    <location>
        <position position="292"/>
    </location>
    <ligand>
        <name>Ca(2+)</name>
        <dbReference type="ChEBI" id="CHEBI:29108"/>
    </ligand>
</feature>
<feature type="disulfide bond" evidence="21 22">
    <location>
        <begin position="280"/>
        <end position="298"/>
    </location>
</feature>
<feature type="mutagenesis site" description="Increases activity on pNP-butyrate." evidence="6">
    <original>R</original>
    <variation>C</variation>
    <location>
        <position position="67"/>
    </location>
</feature>
<feature type="mutagenesis site" description="Increases activity on pNP-butyrate." evidence="6">
    <original>A</original>
    <variation>V</variation>
    <location>
        <position position="68"/>
    </location>
</feature>
<feature type="mutagenesis site" description="Increases activity on pNP-butyrate; when associated with C-137." evidence="6">
    <original>S</original>
    <variation>P</variation>
    <location>
        <position position="69"/>
    </location>
</feature>
<feature type="mutagenesis site" description="Decreases activity; when associated with A-194 and A-217." evidence="9">
    <original>Y</original>
    <variation>A</variation>
    <location>
        <position position="99"/>
    </location>
</feature>
<feature type="mutagenesis site" description="Increases activity on pNP-butyrate." evidence="6">
    <original>N</original>
    <variation>I</variation>
    <location>
        <position position="126"/>
    </location>
</feature>
<feature type="mutagenesis site" description="Increases activity on pNP-butyrate; when associated with P-69." evidence="6">
    <original>R</original>
    <variation>C</variation>
    <location>
        <position position="137"/>
    </location>
</feature>
<feature type="mutagenesis site" description="Abolishes activity." evidence="9">
    <original>S</original>
    <variation>A</variation>
    <location>
        <position position="169"/>
    </location>
</feature>
<feature type="mutagenesis site" description="Decreases activity; when associated with A-99 and A-217." evidence="9">
    <original>W</original>
    <variation>A</variation>
    <location>
        <position position="194"/>
    </location>
</feature>
<feature type="mutagenesis site" description="Abolishes activity." evidence="9">
    <original>D</original>
    <variation>A</variation>
    <location>
        <position position="215"/>
    </location>
</feature>
<feature type="mutagenesis site" description="Decreases activity; when associated with A-99 and A-194." evidence="9">
    <original>I</original>
    <variation>A</variation>
    <location>
        <position position="217"/>
    </location>
</feature>
<feature type="mutagenesis site" description="Abolishes activity." evidence="9">
    <original>H</original>
    <variation>A</variation>
    <location>
        <position position="247"/>
    </location>
</feature>
<feature type="helix" evidence="25">
    <location>
        <begin position="51"/>
        <end position="55"/>
    </location>
</feature>
<feature type="strand" evidence="25">
    <location>
        <begin position="56"/>
        <end position="58"/>
    </location>
</feature>
<feature type="strand" evidence="25">
    <location>
        <begin position="63"/>
        <end position="68"/>
    </location>
</feature>
<feature type="helix" evidence="25">
    <location>
        <begin position="70"/>
        <end position="72"/>
    </location>
</feature>
<feature type="strand" evidence="24">
    <location>
        <begin position="74"/>
        <end position="76"/>
    </location>
</feature>
<feature type="strand" evidence="25">
    <location>
        <begin position="79"/>
        <end position="86"/>
    </location>
</feature>
<feature type="strand" evidence="25">
    <location>
        <begin position="90"/>
        <end position="96"/>
    </location>
</feature>
<feature type="helix" evidence="25">
    <location>
        <begin position="103"/>
        <end position="105"/>
    </location>
</feature>
<feature type="helix" evidence="25">
    <location>
        <begin position="107"/>
        <end position="114"/>
    </location>
</feature>
<feature type="turn" evidence="25">
    <location>
        <begin position="115"/>
        <end position="117"/>
    </location>
</feature>
<feature type="strand" evidence="25">
    <location>
        <begin position="119"/>
        <end position="123"/>
    </location>
</feature>
<feature type="helix" evidence="25">
    <location>
        <begin position="132"/>
        <end position="148"/>
    </location>
</feature>
<feature type="helix" evidence="25">
    <location>
        <begin position="152"/>
        <end position="155"/>
    </location>
</feature>
<feature type="strand" evidence="25">
    <location>
        <begin position="158"/>
        <end position="168"/>
    </location>
</feature>
<feature type="helix" evidence="25">
    <location>
        <begin position="170"/>
        <end position="181"/>
    </location>
</feature>
<feature type="strand" evidence="25">
    <location>
        <begin position="186"/>
        <end position="192"/>
    </location>
</feature>
<feature type="strand" evidence="25">
    <location>
        <begin position="207"/>
        <end position="212"/>
    </location>
</feature>
<feature type="strand" evidence="25">
    <location>
        <begin position="216"/>
        <end position="218"/>
    </location>
</feature>
<feature type="turn" evidence="25">
    <location>
        <begin position="220"/>
        <end position="223"/>
    </location>
</feature>
<feature type="helix" evidence="25">
    <location>
        <begin position="224"/>
        <end position="230"/>
    </location>
</feature>
<feature type="strand" evidence="25">
    <location>
        <begin position="237"/>
        <end position="242"/>
    </location>
</feature>
<feature type="helix" evidence="25">
    <location>
        <begin position="249"/>
        <end position="251"/>
    </location>
</feature>
<feature type="helix" evidence="25">
    <location>
        <begin position="255"/>
        <end position="269"/>
    </location>
</feature>
<feature type="helix" evidence="25">
    <location>
        <begin position="273"/>
        <end position="275"/>
    </location>
</feature>
<feature type="helix" evidence="25">
    <location>
        <begin position="276"/>
        <end position="279"/>
    </location>
</feature>
<feature type="strand" evidence="25">
    <location>
        <begin position="290"/>
        <end position="296"/>
    </location>
</feature>
<comment type="function">
    <text evidence="2 5 6 7 9">Catalyzes the hydrolysis of cutin, a polyester that forms the structure of plant cuticle (PubMed:20393707, PubMed:22183084, PubMed:25910960, PubMed:33387709). Shows esterase activity towards p-nitrophenol-linked aliphatic esters (pNP-aliphatic esters) (PubMed:20393707, PubMed:22183084, PubMed:25910960, PubMed:33387709). Capable of degrading the plastic poly(ethylene terephthalate) (PET), the most abundant polyester plastic in the world (By similarity). Can also depolymerize the synthetic polyesters poly(epsilon-caprolactone) (PCL), poly(butylene succinate-co-adipate) (PBSA), poly(butylene succinate) (PBS), and poly(lactic acid) (PLA) (PubMed:20393707, PubMed:22183084).</text>
</comment>
<comment type="catalytic activity">
    <reaction evidence="5 6">
        <text>an acetyl ester + H2O = an aliphatic alcohol + acetate + H(+)</text>
        <dbReference type="Rhea" id="RHEA:12957"/>
        <dbReference type="ChEBI" id="CHEBI:2571"/>
        <dbReference type="ChEBI" id="CHEBI:15377"/>
        <dbReference type="ChEBI" id="CHEBI:15378"/>
        <dbReference type="ChEBI" id="CHEBI:30089"/>
        <dbReference type="ChEBI" id="CHEBI:47622"/>
    </reaction>
    <physiologicalReaction direction="left-to-right" evidence="5 6">
        <dbReference type="Rhea" id="RHEA:12958"/>
    </physiologicalReaction>
</comment>
<comment type="catalytic activity">
    <reaction evidence="15 16">
        <text>(ethylene terephthalate)(n) + H2O = (ethylene terephthalate)(n-1) + 4-[(2-hydroxyethoxy)carbonyl]benzoate + H(+)</text>
        <dbReference type="Rhea" id="RHEA:49528"/>
        <dbReference type="Rhea" id="RHEA-COMP:12420"/>
        <dbReference type="Rhea" id="RHEA-COMP:12421"/>
        <dbReference type="ChEBI" id="CHEBI:15377"/>
        <dbReference type="ChEBI" id="CHEBI:15378"/>
        <dbReference type="ChEBI" id="CHEBI:131701"/>
        <dbReference type="ChEBI" id="CHEBI:131704"/>
        <dbReference type="EC" id="3.1.1.101"/>
    </reaction>
    <physiologicalReaction direction="left-to-right" evidence="15 16">
        <dbReference type="Rhea" id="RHEA:49529"/>
    </physiologicalReaction>
</comment>
<comment type="catalytic activity">
    <reaction evidence="5 6 7 9">
        <text>a butanoate ester + H2O = an aliphatic alcohol + butanoate + H(+)</text>
        <dbReference type="Rhea" id="RHEA:47348"/>
        <dbReference type="ChEBI" id="CHEBI:2571"/>
        <dbReference type="ChEBI" id="CHEBI:15377"/>
        <dbReference type="ChEBI" id="CHEBI:15378"/>
        <dbReference type="ChEBI" id="CHEBI:17968"/>
        <dbReference type="ChEBI" id="CHEBI:50477"/>
    </reaction>
    <physiologicalReaction direction="left-to-right" evidence="5 6 7 9">
        <dbReference type="Rhea" id="RHEA:47349"/>
    </physiologicalReaction>
</comment>
<comment type="catalytic activity">
    <reaction evidence="15 16 17 19">
        <text>cutin + H2O = cutin monomers.</text>
        <dbReference type="EC" id="3.1.1.74"/>
    </reaction>
</comment>
<comment type="catalytic activity">
    <reaction evidence="5 6">
        <text>a hexanoate ester + H2O = an aliphatic alcohol + hexanoate + H(+)</text>
        <dbReference type="Rhea" id="RHEA:47352"/>
        <dbReference type="ChEBI" id="CHEBI:2571"/>
        <dbReference type="ChEBI" id="CHEBI:15377"/>
        <dbReference type="ChEBI" id="CHEBI:15378"/>
        <dbReference type="ChEBI" id="CHEBI:17120"/>
        <dbReference type="ChEBI" id="CHEBI:87656"/>
    </reaction>
    <physiologicalReaction direction="left-to-right" evidence="5 6">
        <dbReference type="Rhea" id="RHEA:47353"/>
    </physiologicalReaction>
</comment>
<comment type="catalytic activity">
    <reaction evidence="5 6">
        <text>an octanoate ester + H2O = an aliphatic alcohol + octanoate + H(+)</text>
        <dbReference type="Rhea" id="RHEA:47356"/>
        <dbReference type="ChEBI" id="CHEBI:2571"/>
        <dbReference type="ChEBI" id="CHEBI:15377"/>
        <dbReference type="ChEBI" id="CHEBI:15378"/>
        <dbReference type="ChEBI" id="CHEBI:25646"/>
        <dbReference type="ChEBI" id="CHEBI:87657"/>
    </reaction>
    <physiologicalReaction direction="left-to-right" evidence="5 6">
        <dbReference type="Rhea" id="RHEA:47357"/>
    </physiologicalReaction>
</comment>
<comment type="cofactor">
    <cofactor evidence="8 10 16">
        <name>Ca(2+)</name>
        <dbReference type="ChEBI" id="CHEBI:29108"/>
    </cofactor>
    <text evidence="6">Can also bind other divalent metal ions with lower efficiency (PubMed:22183084). Calcium ion binding contributes to the thermostability of the protein (PubMed:22183084).</text>
</comment>
<comment type="activity regulation">
    <text evidence="6">Activated by calcium ions (PubMed:22183084). Activated by magnesium ions (PubMed:22183084). Activated by manganese ions (PubMed:22183084). Inhibited by the serine hydrolase inhibitor phenylmethanesulfonyl fluoride (PMSF) (PubMed:22183084). Inhibited by the chelator ethylenediaminetetraacetic acid (EDTA) (PubMed:22183084). Inhibited by iron ions (PubMed:22183084). Inhibited by aluminum ions (PubMed:22183084). Inhibited by rubidium ions (PubMed:22183084). Inhibited by lithium ions (PubMed:22183084).</text>
</comment>
<comment type="biophysicochemical properties">
    <kinetics>
        <KM evidence="6">3.22 mM for pNP-acetate (at 37 degrees Celsius and pH 7)</KM>
        <KM evidence="6">3.41 mM for pNP-butyrate (at 37 degrees Celsius and pH 7)</KM>
        <KM evidence="6">2.37 mM for pNP-hexanoate (at 37 degrees Celsius and pH 7)</KM>
        <KM evidence="6">1.87 mM for pNP-octanoate (at 37 degrees Celsius and pH 7)</KM>
        <text evidence="6">kcat is 2.06 sec(-1) with pNP-acetate as substrate (at 37 degrees Celsius and pH 7) (PubMed:22183084). kcat is 4.48 sec(-1) with pNP-butyrate as substrate (at 37 degrees Celsius and pH 7) (PubMed:22183084). kcat is 3.28 sec(-1) with pNP-hexanoate as substrate (at 37 degrees Celsius and pH 7) (PubMed:22183084). kcat is 2.45 sec(-1) with pNP-octanoate as substrate (at 37 degrees Celsius and pH 7) (PubMed:22183084).</text>
    </kinetics>
    <phDependence>
        <text evidence="5">Optimum pH is 6.</text>
    </phDependence>
    <temperatureDependence>
        <text evidence="5">Optimum temperature is 50 degrees Celsius.</text>
    </temperatureDependence>
</comment>
<comment type="subunit">
    <text evidence="5 10">Monomer.</text>
</comment>
<comment type="subcellular location">
    <subcellularLocation>
        <location evidence="3">Secreted</location>
    </subcellularLocation>
    <subcellularLocation>
        <location evidence="3">Periplasm</location>
    </subcellularLocation>
</comment>
<comment type="induction">
    <text evidence="7">Expression is not induced by the synthetic polyester poly(butylene succinate-co-adipate) (PBSA).</text>
</comment>
<comment type="biotechnology">
    <text evidence="5 6 9">Shows promising applications in ethyl alcohol distillery processes as it may be utilized for treatment of molasses wastewater (PubMed:33387709). Has potential for application in biological recycling of plastic waste products (PubMed:20393707, PubMed:22183084).</text>
</comment>
<comment type="similarity">
    <text evidence="14">Belongs to the AB hydrolase superfamily.</text>
</comment>
<accession>F7IX06</accession>
<reference evidence="20" key="1">
    <citation type="journal article" date="2010" name="Appl. Microbiol. Biotechnol.">
        <title>Diversity of polyester-degrading bacteria in compost and molecular analysis of a thermoactive esterase from Thermobifida alba AHK119.</title>
        <authorList>
            <person name="Hu X."/>
            <person name="Thumarat U."/>
            <person name="Zhang X."/>
            <person name="Tang M."/>
            <person name="Kawai F."/>
        </authorList>
    </citation>
    <scope>NUCLEOTIDE SEQUENCE [GENOMIC DNA]</scope>
    <scope>FUNCTION</scope>
    <scope>CATALYTIC ACTIVITY</scope>
    <scope>BIOPHYSICOCHEMICAL PROPERTIES</scope>
    <scope>SUBUNIT</scope>
    <scope>BIOTECHNOLOGY</scope>
    <source>
        <strain evidence="11">AHK119</strain>
    </source>
</reference>
<reference evidence="14" key="2">
    <citation type="journal article" date="2012" name="Appl. Microbiol. Biotechnol.">
        <title>Biochemical and genetic analysis of a cutinase-type polyesterase from a thermophilic Thermobifida alba AHK119.</title>
        <authorList>
            <person name="Thumarat U."/>
            <person name="Nakamura R."/>
            <person name="Kawabata T."/>
            <person name="Suzuki H."/>
            <person name="Kawai F."/>
        </authorList>
    </citation>
    <scope>FUNCTION</scope>
    <scope>CATALYTIC ACTIVITY</scope>
    <scope>COFACTOR</scope>
    <scope>ACTIVITY REGULATION</scope>
    <scope>BIOPHYSICOCHEMICAL PROPERTIES</scope>
    <scope>BIOTECHNOLOGY</scope>
    <scope>MUTAGENESIS OF ARG-67; ALA-68; SER-69; ASN-126 AND ARG-137</scope>
</reference>
<reference evidence="14" key="3">
    <citation type="journal article" date="2015" name="J. Biosci. Bioeng.">
        <title>Comparison of genetic structures and biochemical properties of tandem cutinase-type polyesterases from Thermobifida alba AHK119.</title>
        <authorList>
            <person name="Thumarat U."/>
            <person name="Kawabata T."/>
            <person name="Nakajima M."/>
            <person name="Nakajima H."/>
            <person name="Sugiyama A."/>
            <person name="Yazaki K."/>
            <person name="Tada T."/>
            <person name="Waku T."/>
            <person name="Tanaka N."/>
            <person name="Kawai F."/>
        </authorList>
    </citation>
    <scope>FUNCTION</scope>
    <scope>CATALYTIC ACTIVITY</scope>
    <scope>INDUCTION</scope>
</reference>
<reference evidence="14" key="4">
    <citation type="journal article" date="2021" name="Bioresour. Technol.">
        <title>Decolorization of molasses alcohol wastewater by thermophilic hydrolase with practical application value.</title>
        <authorList>
            <person name="Zhang Z."/>
            <person name="Wang W."/>
            <person name="Li D."/>
            <person name="Xiao J."/>
            <person name="Wu L."/>
            <person name="Geng X."/>
            <person name="Wu G."/>
            <person name="Zeng Z."/>
            <person name="Hu J."/>
        </authorList>
    </citation>
    <scope>FUNCTION</scope>
    <scope>CATALYTIC ACTIVITY</scope>
    <scope>BIOTECHNOLOGY</scope>
    <scope>MUTAGENESIS OF TYR-99; SER-169; TRP-194; ASP-215; ILE-217 AND HIS-247</scope>
</reference>
<reference evidence="21" key="5">
    <citation type="journal article" date="2012" name="Polym. Degrad. Stab.">
        <title>Crystal structure of cutinase Est119 from Thermobida alba AHK119 that can degrade modpolyethylene terephthalate at 1.76 A resolution.</title>
        <authorList>
            <person name="Kitadokoro K."/>
            <person name="Thumarat U."/>
            <person name="Nakamura R."/>
            <person name="Nishimura K."/>
            <person name="Karatani H."/>
            <person name="Suzuki H."/>
            <person name="Kawai F."/>
        </authorList>
    </citation>
    <scope>X-RAY CRYSTALLOGRAPHY (1.76 ANGSTROMS) IN COMPLEX WITH CALCIUM</scope>
    <scope>COFACTOR</scope>
    <scope>SUBUNIT</scope>
    <scope>DISULFIDE BONDS</scope>
</reference>
<reference evidence="22" key="6">
    <citation type="submission" date="2014-09" db="PDB data bank">
        <title>Structure of calcium bound cutinase Est119 from Thermobifida alba.</title>
        <authorList>
            <person name="Kitadokoro K."/>
            <person name="Thumarat U."/>
            <person name="Kawai F."/>
        </authorList>
    </citation>
    <scope>X-RAY CRYSTALLOGRAPHY (1.68 ANGSTROMS) IN COMPLEX WITH CALCIUM</scope>
    <scope>DISULFIDE BONDS</scope>
</reference>
<reference evidence="23" key="7">
    <citation type="journal article" date="2019" name="FEBS J.">
        <title>Structural insights into the unique polylactate-degrading mechanism of Thermobifidaalba cutinase.</title>
        <authorList>
            <person name="Kitadokoro K."/>
            <person name="Kakara M."/>
            <person name="Matsui S."/>
            <person name="Osokoshi R."/>
            <person name="Thumarat U."/>
            <person name="Kawai F."/>
            <person name="Kamitani S."/>
        </authorList>
    </citation>
    <scope>X-RAY CRYSTALLOGRAPHY (1.30 ANGSTROMS) OF 35-300 OF MUTANT A-169 IN COMPLEX WITH LACTIC ACID AND CALCIUM</scope>
    <scope>COFACTOR</scope>
    <scope>ACTIVE SITE</scope>
    <scope>DISULFIDE BONDS</scope>
    <scope>REACTION MECHANISM</scope>
</reference>
<sequence length="300" mass="32353">MSVTTPRRETSLLSRALRATAAAATAVVATVALAAPAQAANPYERGPNPTESMLEARSGPFSVSEERASRFGADGFGGGTIYYPRENNTYGAIAISPGYTGTQSSIAWLGERIASHGFVVIAIDTNTTLDQPDSRARQLNAALDYMLTDASSAVRNRIDASRLAVMGHSMGGGGTLRLASQRPDLKAAIPLTPWHLNKSWRDITVPTLIIGAEYDTIASVTLHSKPFYNSIPSPTDKAYLELDGASHFAPNITNKTIGMYSVAWLKRFVDEDTRYTQFLCPGPRTGLLSDVEEYRSTCPF</sequence>
<keyword id="KW-0002">3D-structure</keyword>
<keyword id="KW-0106">Calcium</keyword>
<keyword id="KW-1015">Disulfide bond</keyword>
<keyword id="KW-0378">Hydrolase</keyword>
<keyword id="KW-0479">Metal-binding</keyword>
<keyword id="KW-0574">Periplasm</keyword>
<keyword id="KW-0964">Secreted</keyword>
<keyword id="KW-0719">Serine esterase</keyword>
<keyword id="KW-0732">Signal</keyword>
<evidence type="ECO:0000250" key="1">
    <source>
        <dbReference type="UniProtKB" id="A0A0K8P6T7"/>
    </source>
</evidence>
<evidence type="ECO:0000250" key="2">
    <source>
        <dbReference type="UniProtKB" id="D4Q9N1"/>
    </source>
</evidence>
<evidence type="ECO:0000250" key="3">
    <source>
        <dbReference type="UniProtKB" id="G8GER6"/>
    </source>
</evidence>
<evidence type="ECO:0000255" key="4"/>
<evidence type="ECO:0000269" key="5">
    <source>
    </source>
</evidence>
<evidence type="ECO:0000269" key="6">
    <source>
    </source>
</evidence>
<evidence type="ECO:0000269" key="7">
    <source>
    </source>
</evidence>
<evidence type="ECO:0000269" key="8">
    <source>
    </source>
</evidence>
<evidence type="ECO:0000269" key="9">
    <source>
    </source>
</evidence>
<evidence type="ECO:0000269" key="10">
    <source ref="5"/>
</evidence>
<evidence type="ECO:0000303" key="11">
    <source>
    </source>
</evidence>
<evidence type="ECO:0000303" key="12">
    <source>
    </source>
</evidence>
<evidence type="ECO:0000303" key="13">
    <source>
    </source>
</evidence>
<evidence type="ECO:0000305" key="14"/>
<evidence type="ECO:0000305" key="15">
    <source>
    </source>
</evidence>
<evidence type="ECO:0000305" key="16">
    <source>
    </source>
</evidence>
<evidence type="ECO:0000305" key="17">
    <source>
    </source>
</evidence>
<evidence type="ECO:0000305" key="18">
    <source>
    </source>
</evidence>
<evidence type="ECO:0000305" key="19">
    <source>
    </source>
</evidence>
<evidence type="ECO:0000312" key="20">
    <source>
        <dbReference type="EMBL" id="BAK48590.1"/>
    </source>
</evidence>
<evidence type="ECO:0007744" key="21">
    <source>
        <dbReference type="PDB" id="3VIS"/>
    </source>
</evidence>
<evidence type="ECO:0007744" key="22">
    <source>
        <dbReference type="PDB" id="3WYN"/>
    </source>
</evidence>
<evidence type="ECO:0007744" key="23">
    <source>
        <dbReference type="PDB" id="6AID"/>
    </source>
</evidence>
<evidence type="ECO:0007829" key="24">
    <source>
        <dbReference type="PDB" id="3WYN"/>
    </source>
</evidence>
<evidence type="ECO:0007829" key="25">
    <source>
        <dbReference type="PDB" id="6AID"/>
    </source>
</evidence>
<organism>
    <name type="scientific">Thermobifida alba</name>
    <name type="common">Thermomonospora alba</name>
    <dbReference type="NCBI Taxonomy" id="53522"/>
    <lineage>
        <taxon>Bacteria</taxon>
        <taxon>Bacillati</taxon>
        <taxon>Actinomycetota</taxon>
        <taxon>Actinomycetes</taxon>
        <taxon>Streptosporangiales</taxon>
        <taxon>Nocardiopsidaceae</taxon>
        <taxon>Thermobifida</taxon>
    </lineage>
</organism>
<gene>
    <name evidence="12" type="primary">est2</name>
    <name evidence="11" type="synonym">est119</name>
</gene>
<name>PETH2_THEAE</name>
<proteinExistence type="evidence at protein level"/>
<protein>
    <recommendedName>
        <fullName evidence="12">Cutinase est2</fullName>
        <ecNumber evidence="15 16 17 19">3.1.1.74</ecNumber>
    </recommendedName>
    <alternativeName>
        <fullName evidence="14">Poly(ethylene terephthalate) hydrolase</fullName>
        <shortName evidence="14">PET hydrolase</shortName>
        <shortName evidence="14">PETase</shortName>
        <ecNumber evidence="15 16">3.1.1.101</ecNumber>
    </alternativeName>
    <alternativeName>
        <fullName evidence="13">TaCut2</fullName>
    </alternativeName>
</protein>
<dbReference type="EC" id="3.1.1.74" evidence="15 16 17 19"/>
<dbReference type="EC" id="3.1.1.101" evidence="15 16"/>
<dbReference type="EMBL" id="AB445476">
    <property type="protein sequence ID" value="BAK48590.1"/>
    <property type="molecule type" value="Genomic_DNA"/>
</dbReference>
<dbReference type="PDB" id="3VIS">
    <property type="method" value="X-ray"/>
    <property type="resolution" value="1.76 A"/>
    <property type="chains" value="A/B=1-300"/>
</dbReference>
<dbReference type="PDB" id="3WYN">
    <property type="method" value="X-ray"/>
    <property type="resolution" value="1.68 A"/>
    <property type="chains" value="A/B=1-300"/>
</dbReference>
<dbReference type="PDB" id="6AID">
    <property type="method" value="X-ray"/>
    <property type="resolution" value="1.30 A"/>
    <property type="chains" value="A=35-300"/>
</dbReference>
<dbReference type="PDBsum" id="3VIS"/>
<dbReference type="PDBsum" id="3WYN"/>
<dbReference type="PDBsum" id="6AID"/>
<dbReference type="SMR" id="F7IX06"/>
<dbReference type="ESTHER" id="9acto-f7ix06">
    <property type="family name" value="Polyesterase-lipase-cutinase"/>
</dbReference>
<dbReference type="SABIO-RK" id="F7IX06"/>
<dbReference type="EvolutionaryTrace" id="F7IX06"/>
<dbReference type="GO" id="GO:0005576">
    <property type="term" value="C:extracellular region"/>
    <property type="evidence" value="ECO:0007669"/>
    <property type="project" value="UniProtKB-SubCell"/>
</dbReference>
<dbReference type="GO" id="GO:0042597">
    <property type="term" value="C:periplasmic space"/>
    <property type="evidence" value="ECO:0007669"/>
    <property type="project" value="UniProtKB-SubCell"/>
</dbReference>
<dbReference type="GO" id="GO:0050525">
    <property type="term" value="F:cutinase activity"/>
    <property type="evidence" value="ECO:0000314"/>
    <property type="project" value="UniProtKB"/>
</dbReference>
<dbReference type="GO" id="GO:0046872">
    <property type="term" value="F:metal ion binding"/>
    <property type="evidence" value="ECO:0007669"/>
    <property type="project" value="UniProtKB-KW"/>
</dbReference>
<dbReference type="Gene3D" id="3.40.50.1820">
    <property type="entry name" value="alpha/beta hydrolase"/>
    <property type="match status" value="1"/>
</dbReference>
<dbReference type="InterPro" id="IPR029058">
    <property type="entry name" value="AB_hydrolase_fold"/>
</dbReference>
<dbReference type="InterPro" id="IPR050261">
    <property type="entry name" value="FrsA_esterase"/>
</dbReference>
<dbReference type="InterPro" id="IPR041127">
    <property type="entry name" value="PET_hydrolase/cutinase-like"/>
</dbReference>
<dbReference type="PANTHER" id="PTHR22946">
    <property type="entry name" value="DIENELACTONE HYDROLASE DOMAIN-CONTAINING PROTEIN-RELATED"/>
    <property type="match status" value="1"/>
</dbReference>
<dbReference type="PANTHER" id="PTHR22946:SF9">
    <property type="entry name" value="POLYKETIDE TRANSFERASE AF380"/>
    <property type="match status" value="1"/>
</dbReference>
<dbReference type="Pfam" id="PF12740">
    <property type="entry name" value="PETase"/>
    <property type="match status" value="1"/>
</dbReference>
<dbReference type="SUPFAM" id="SSF53474">
    <property type="entry name" value="alpha/beta-Hydrolases"/>
    <property type="match status" value="1"/>
</dbReference>